<name>CIC_HUMAN</name>
<keyword id="KW-0002">3D-structure</keyword>
<keyword id="KW-0007">Acetylation</keyword>
<keyword id="KW-0025">Alternative splicing</keyword>
<keyword id="KW-0225">Disease variant</keyword>
<keyword id="KW-0238">DNA-binding</keyword>
<keyword id="KW-0991">Intellectual disability</keyword>
<keyword id="KW-0488">Methylation</keyword>
<keyword id="KW-0539">Nucleus</keyword>
<keyword id="KW-0597">Phosphoprotein</keyword>
<keyword id="KW-1267">Proteomics identification</keyword>
<keyword id="KW-1185">Reference proteome</keyword>
<keyword id="KW-0678">Repressor</keyword>
<keyword id="KW-0804">Transcription</keyword>
<keyword id="KW-0805">Transcription regulation</keyword>
<sequence length="2517" mass="258033">MKPMKKACTGLSGPGSGSKSPPATRAKALRRRGAGEGDKPEEEDDEAQQPQPQSGPEEAEEGEEEEAERGPGAEGPPLELHPGDPAPGPAEDPKGDGEAGRWEPSLSRKTATFKSRAPKKKYVEEHGAGSSGVAGAPEERVRTPEEASGLGVPPRPPTSTRSSSTDTASEHSADLEDEPAEACGPGPWPPGSTSGSYDLRQLRSQRVLARRGDGLFLPAVVRQVRRSQDLGVQFPGDRALTFYEGVPGAGVDVVLDATPPPGALVVGTAVCTCVEPGVAAYREGVVVEVATKPAAYKVRLSPGPSSQPGLPGSLPQPPQPLHREPEEAVWVARSSLRLLRPPWEPETMLRKPPTGPEEEQAEPGATLPPCPAALDPKQPEDAEVSKISFGGNLGTHCEEGEEKHPPALGTPALLPLPPPQLLSPPPKSPAFVGPGRPGEQPSPCQEGSQGGSRSSSVASLEKGTAPAARARTPLTAAQQKYKKGDVVCTPSGIRKKFNGKQWRRLCSRDGCMKESQRRGYCSRHLSMRTKEMEGLADSGPGGAGRPAAVAAREGSTEFDWGDETSRDSEASSVAARGDSRPRLVAPADLSRFEFDECEAAVMLVSLGSSRSGTPSFSPVSTQSPFSPAPSPSPSPLFGFRPANFSPINASPVIQRTAVRSRHLSASTPKAGVLTPPDLGPHPPPPAPRERHSSGILPTFQTNLTFTVPISPGRRKTELLPHPGALGAPGAGGGGAAPDFPKSDSLDSGVDSVSHTPTPSTPAGFRAVSPAVPFSRSRQPSPLLLLPPPAGLTSDPGPSVRRVPAVQRDSPVIVRNPDVPLPSKFPGEVGTAGEVRAGGPGRGCRETPVPPGVASGKPGLPPPLPAPVPITVPPAAPTAVAQPMPAFGLASSPFQPVAFHPSPAALLPVLVPSSYTSHPAPKKEVIMGRPGTVWTNVEPRSVAVFPWHSLVPFLAPSQPDPSVQPSEAQQPASHPVASNQSKEPAESAAVAHERPPGGTGSADPERPPGATCPESPGPGPPHPLGVVESGKGPPPTTEEEASGPPGEPRLDSETESDHDDAFLSIMSPEIQLPLPPGKRRTQSLSALPKERDSSSEKDGRSPNKREKDHIRRPMNAFMIFSKRHRALVHQRHPNQDNRTVSKILGEWWYALGPKEKQKYHDLAFQVKEAHFKAHPDWKWCNKDRKKSSSEAKPTSLGLAGGHKETRERSMSETGTAAAPGVSSELLSVAAQTLLSSDTKAPGSSSCGAERLHTVGGPGSARPRAFSHSGVHSLDGGEVDSQALQELTQMVSGPASYSGPKPSTQYGAPGPFAAPGEGGALAATGRPPLLPTRASRSQRAASEDMTSDEERMVICEEEGDDDVIADDGFGTTDIDLKCKERVTDSESGDSSGEDPEGNKGFGRKVFSPVIRSSFTHCRPPLDPEPPGPPDPPVAFGKGYGSAPSSSASSPASSSASAATSFSLGSGTFKAQESGQGSTAGPLRPPPPGAGGPATPSKATRFLPMDPATFRRKRPESVGGLEPPGPSVIAAPPSGGGNILQTLVLPPNKEEQEGGGARVPSAPAPSLAYGAPAAPLSRPAATMVTNVVRPVSSTPVPIASKPFPTSGRAEASPNDTAGARTEMGTGSRVPGGSPLGVSLVYSDKKSAAATSPAPHLVAGPLLGTVGKAPATVTNLLVGTPGYGAPAPPAVQFIAQGAPGGGTTAGSGAGAGSGPNGPVPLGILQPGALGKAGGITQVQYILPTLPQQLQVAPAPAPAPGTKAAAPSGPAPTTSIRFTLPPGTSTNGKVLAATAPTPGIPILQSVPSAPPPKAQSVSPVQAPPPGGSAQLLPGKVLVPLAAPSMSVRGGGAGQPLPLVSPPFSVPVQNGAQPPSKIIQLTPVPVSTPSGLVPPLSPATLPGPTSQPQKVLLPSSTRITYVQSAGGHALPLGTSPASSQAGTVTSYGPTSSVALGFTSLGPSGPAFVQPLLSAGQAPLLAPGQVGVSPVPSPQLPPACAAPGGPVITAFYSGSPAPTSSAPLAQPSQAPPSLVYTVATSTTPPAATILPKGPPAPATATPAPTSPFPSATAGSMTYSLVAPKAQRPSPKAPQKVKAAIASIPVGSFEAGASGRPGPAPRQPLEPGPVREPTAPESELEGQPTPPAPPPLPETWTPTARSSPPLPPPAEERTSAKGPETMASKFPSSSSDWRVPGQGLENRGEPPTPPSPAPAPAVAPGGSSESSSGRAAGDTPERKEAAGTGKKVKVRPPPLKKTFDSVDNRVLSEVDFEERFAELPEFRPEEVLPSPTLQSLATSPRAILGSYRKKRKNSTDLDSAPEDPTSPKRKMRRRSSCSSEPNTPKSAKCEGDIFTFDRTGTEAEDVLGELEYDKVPYSSLRRTLDQRRALVMQLFQDHGFFPSAQATAAFQARYADIFPSKVCLQLKIREVRQKIMQAATPTEQPPGAEAPLPVPPPTGTAAAPAPTPSPAGGPDPTSPSSDSGTAQAAPPLPPPPESGPGQPGWEGAPQPSPPPPGPSTAATGR</sequence>
<protein>
    <recommendedName>
        <fullName>Protein capicua homolog</fullName>
    </recommendedName>
</protein>
<feature type="chain" id="PRO_0000048598" description="Protein capicua homolog">
    <location>
        <begin position="1"/>
        <end position="2517"/>
    </location>
</feature>
<feature type="DNA-binding region" description="HMG box" evidence="2">
    <location>
        <begin position="1109"/>
        <end position="1177"/>
    </location>
</feature>
<feature type="region of interest" description="Disordered" evidence="3">
    <location>
        <begin position="1"/>
        <end position="197"/>
    </location>
</feature>
<feature type="region of interest" description="Disordered" evidence="3">
    <location>
        <begin position="300"/>
        <end position="325"/>
    </location>
</feature>
<feature type="region of interest" description="Disordered" evidence="3">
    <location>
        <begin position="342"/>
        <end position="483"/>
    </location>
</feature>
<feature type="region of interest" description="Disordered" evidence="3">
    <location>
        <begin position="531"/>
        <end position="579"/>
    </location>
</feature>
<feature type="region of interest" description="Disordered" evidence="3">
    <location>
        <begin position="608"/>
        <end position="640"/>
    </location>
</feature>
<feature type="region of interest" description="Disordered" evidence="3">
    <location>
        <begin position="658"/>
        <end position="767"/>
    </location>
</feature>
<feature type="region of interest" description="Disordered" evidence="3">
    <location>
        <begin position="812"/>
        <end position="842"/>
    </location>
</feature>
<feature type="region of interest" description="Interaction with ATXN1" evidence="1">
    <location>
        <begin position="937"/>
        <end position="955"/>
    </location>
</feature>
<feature type="region of interest" description="Disordered" evidence="3">
    <location>
        <begin position="955"/>
        <end position="1110"/>
    </location>
</feature>
<feature type="region of interest" description="Disordered" evidence="3">
    <location>
        <begin position="1179"/>
        <end position="1220"/>
    </location>
</feature>
<feature type="region of interest" description="Disordered" evidence="3">
    <location>
        <begin position="1235"/>
        <end position="1274"/>
    </location>
</feature>
<feature type="region of interest" description="Disordered" evidence="3">
    <location>
        <begin position="1290"/>
        <end position="1347"/>
    </location>
</feature>
<feature type="region of interest" description="Disordered" evidence="3">
    <location>
        <begin position="1379"/>
        <end position="1539"/>
    </location>
</feature>
<feature type="region of interest" description="Disordered" evidence="3">
    <location>
        <begin position="1595"/>
        <end position="1628"/>
    </location>
</feature>
<feature type="region of interest" description="Disordered" evidence="3">
    <location>
        <begin position="1799"/>
        <end position="1818"/>
    </location>
</feature>
<feature type="region of interest" description="Disordered" evidence="3">
    <location>
        <begin position="2039"/>
        <end position="2064"/>
    </location>
</feature>
<feature type="region of interest" description="Disordered" evidence="3">
    <location>
        <begin position="2100"/>
        <end position="2342"/>
    </location>
</feature>
<feature type="region of interest" description="Disordered" evidence="3">
    <location>
        <begin position="2430"/>
        <end position="2517"/>
    </location>
</feature>
<feature type="compositionally biased region" description="Acidic residues" evidence="3">
    <location>
        <begin position="57"/>
        <end position="67"/>
    </location>
</feature>
<feature type="compositionally biased region" description="Basic and acidic residues" evidence="3">
    <location>
        <begin position="91"/>
        <end position="101"/>
    </location>
</feature>
<feature type="compositionally biased region" description="Low complexity" evidence="3">
    <location>
        <begin position="158"/>
        <end position="167"/>
    </location>
</feature>
<feature type="compositionally biased region" description="Low complexity" evidence="3">
    <location>
        <begin position="300"/>
        <end position="313"/>
    </location>
</feature>
<feature type="compositionally biased region" description="Basic and acidic residues" evidence="3">
    <location>
        <begin position="396"/>
        <end position="405"/>
    </location>
</feature>
<feature type="compositionally biased region" description="Pro residues" evidence="3">
    <location>
        <begin position="414"/>
        <end position="428"/>
    </location>
</feature>
<feature type="compositionally biased region" description="Low complexity" evidence="3">
    <location>
        <begin position="451"/>
        <end position="477"/>
    </location>
</feature>
<feature type="compositionally biased region" description="Polar residues" evidence="3">
    <location>
        <begin position="608"/>
        <end position="619"/>
    </location>
</feature>
<feature type="compositionally biased region" description="Pro residues" evidence="3">
    <location>
        <begin position="677"/>
        <end position="686"/>
    </location>
</feature>
<feature type="compositionally biased region" description="Polar residues" evidence="3">
    <location>
        <begin position="698"/>
        <end position="707"/>
    </location>
</feature>
<feature type="compositionally biased region" description="Gly residues" evidence="3">
    <location>
        <begin position="726"/>
        <end position="735"/>
    </location>
</feature>
<feature type="compositionally biased region" description="Polar residues" evidence="3">
    <location>
        <begin position="959"/>
        <end position="981"/>
    </location>
</feature>
<feature type="compositionally biased region" description="Basic and acidic residues" evidence="3">
    <location>
        <begin position="1087"/>
        <end position="1110"/>
    </location>
</feature>
<feature type="compositionally biased region" description="Basic and acidic residues" evidence="3">
    <location>
        <begin position="1179"/>
        <end position="1188"/>
    </location>
</feature>
<feature type="compositionally biased region" description="Basic and acidic residues" evidence="3">
    <location>
        <begin position="1200"/>
        <end position="1209"/>
    </location>
</feature>
<feature type="compositionally biased region" description="Polar residues" evidence="3">
    <location>
        <begin position="1235"/>
        <end position="1245"/>
    </location>
</feature>
<feature type="compositionally biased region" description="Low complexity" evidence="3">
    <location>
        <begin position="1305"/>
        <end position="1323"/>
    </location>
</feature>
<feature type="compositionally biased region" description="Pro residues" evidence="3">
    <location>
        <begin position="1418"/>
        <end position="1430"/>
    </location>
</feature>
<feature type="compositionally biased region" description="Low complexity" evidence="3">
    <location>
        <begin position="1439"/>
        <end position="1456"/>
    </location>
</feature>
<feature type="compositionally biased region" description="Polar residues" evidence="3">
    <location>
        <begin position="1457"/>
        <end position="1474"/>
    </location>
</feature>
<feature type="compositionally biased region" description="Low complexity" evidence="3">
    <location>
        <begin position="2051"/>
        <end position="2064"/>
    </location>
</feature>
<feature type="compositionally biased region" description="Pro residues" evidence="3">
    <location>
        <begin position="2110"/>
        <end position="2119"/>
    </location>
</feature>
<feature type="compositionally biased region" description="Pro residues" evidence="3">
    <location>
        <begin position="2136"/>
        <end position="2145"/>
    </location>
</feature>
<feature type="compositionally biased region" description="Low complexity" evidence="3">
    <location>
        <begin position="2146"/>
        <end position="2155"/>
    </location>
</feature>
<feature type="compositionally biased region" description="Pro residues" evidence="3">
    <location>
        <begin position="2198"/>
        <end position="2209"/>
    </location>
</feature>
<feature type="compositionally biased region" description="Low complexity" evidence="3">
    <location>
        <begin position="2210"/>
        <end position="2225"/>
    </location>
</feature>
<feature type="compositionally biased region" description="Basic and acidic residues" evidence="3">
    <location>
        <begin position="2249"/>
        <end position="2278"/>
    </location>
</feature>
<feature type="compositionally biased region" description="Pro residues" evidence="3">
    <location>
        <begin position="2457"/>
        <end position="2469"/>
    </location>
</feature>
<feature type="modified residue" description="Phosphoserine" evidence="1">
    <location>
        <position position="776"/>
    </location>
</feature>
<feature type="modified residue" description="Phosphoserine" evidence="1">
    <location>
        <position position="780"/>
    </location>
</feature>
<feature type="modified residue" description="Phosphoserine" evidence="1">
    <location>
        <position position="1055"/>
    </location>
</feature>
<feature type="modified residue" description="Phosphoserine" evidence="13 17 19">
    <location>
        <position position="1082"/>
    </location>
</feature>
<feature type="modified residue" description="Omega-N-methylarginine" evidence="1">
    <location>
        <position position="1099"/>
    </location>
</feature>
<feature type="modified residue" description="Phosphoserine" evidence="17">
    <location>
        <position position="1186"/>
    </location>
</feature>
<feature type="modified residue" description="Phosphoserine" evidence="19">
    <location>
        <position position="1271"/>
    </location>
</feature>
<feature type="modified residue" description="Phosphoserine" evidence="1">
    <location>
        <position position="1340"/>
    </location>
</feature>
<feature type="modified residue" description="Phosphoserine" evidence="1">
    <location>
        <position position="1345"/>
    </location>
</feature>
<feature type="modified residue" description="Phosphoserine" evidence="1">
    <location>
        <position position="1405"/>
    </location>
</feature>
<feature type="modified residue" description="Phosphoserine" evidence="19">
    <location>
        <position position="1609"/>
    </location>
</feature>
<feature type="modified residue" description="Phosphoserine" evidence="13 14 15 17">
    <location>
        <position position="1630"/>
    </location>
</feature>
<feature type="modified residue" description="Phosphoserine" evidence="17">
    <location>
        <position position="1648"/>
    </location>
</feature>
<feature type="modified residue" description="Asymmetric dimethylarginine" evidence="18">
    <location>
        <position position="1772"/>
    </location>
</feature>
<feature type="modified residue" description="Omega-N-methylarginine" evidence="1">
    <location>
        <position position="1843"/>
    </location>
</feature>
<feature type="modified residue" description="N6-acetyllysine" evidence="1">
    <location>
        <position position="2177"/>
    </location>
</feature>
<feature type="modified residue" description="Phosphothreonine" evidence="1">
    <location>
        <position position="2200"/>
    </location>
</feature>
<feature type="modified residue" description="Phosphoserine" evidence="17">
    <location>
        <position position="2203"/>
    </location>
</feature>
<feature type="modified residue" description="Phosphoserine" evidence="17">
    <location>
        <position position="2260"/>
    </location>
</feature>
<feature type="modified residue" description="Phosphoserine" evidence="13 14 15 17">
    <location>
        <position position="2282"/>
    </location>
</feature>
<feature type="modified residue" description="Phosphoserine" evidence="12">
    <location>
        <position position="2287"/>
    </location>
</feature>
<feature type="modified residue" description="Phosphoserine" evidence="13 14">
    <location>
        <position position="2291"/>
    </location>
</feature>
<feature type="modified residue" description="Phosphoserine" evidence="17">
    <location>
        <position position="2298"/>
    </location>
</feature>
<feature type="modified residue" description="Phosphoserine" evidence="14 17 19">
    <location>
        <position position="2306"/>
    </location>
</feature>
<feature type="modified residue" description="Phosphothreonine" evidence="19">
    <location>
        <position position="2307"/>
    </location>
</feature>
<feature type="modified residue" description="Phosphoserine" evidence="14 16">
    <location>
        <position position="2311"/>
    </location>
</feature>
<feature type="modified residue" description="Phosphoserine" evidence="14 17 19">
    <location>
        <position position="2318"/>
    </location>
</feature>
<feature type="modified residue" description="Phosphoserine" evidence="19">
    <location>
        <position position="2504"/>
    </location>
</feature>
<feature type="splice variant" id="VSP_062286" description="In isoform 2.">
    <location>
        <begin position="1"/>
        <end position="909"/>
    </location>
</feature>
<feature type="splice variant" id="VSP_062287" description="In isoform 2.">
    <original>VPSSYTSHPAPKKEVIMGRPGT</original>
    <variation>MYSAHRPLMPASSAASRGLGMF</variation>
    <location>
        <begin position="910"/>
        <end position="931"/>
    </location>
</feature>
<feature type="sequence variant" id="VAR_035936" description="In a breast cancer sample; somatic mutation; dbSNP:rs2147179423." evidence="6">
    <original>E</original>
    <variation>K</variation>
    <location>
        <position position="1013"/>
    </location>
</feature>
<feature type="sequence variant" id="VAR_079294" description="In MRD45; decreased protein expression." evidence="8">
    <location>
        <begin position="1262"/>
        <end position="2517"/>
    </location>
</feature>
<feature type="sequence variant" id="VAR_081527" description="Found in a patient with Snijders Blok-Campeau syndrome; uncertain significance; the patient also carries a likely causative variation in CHD3." evidence="9">
    <location>
        <begin position="1401"/>
        <end position="2517"/>
    </location>
</feature>
<feature type="sequence variant" id="VAR_065090" description="In MRD45; uncertain significance; dbSNP:rs373584239." evidence="7">
    <original>R</original>
    <variation>W</variation>
    <location>
        <position position="1401"/>
    </location>
</feature>
<feature type="sequence variant" id="VAR_035937" description="In a breast cancer sample; somatic mutation; dbSNP:rs770323488." evidence="6">
    <original>A</original>
    <variation>T</variation>
    <location>
        <position position="1561"/>
    </location>
</feature>
<feature type="sequence variant" id="VAR_028302" description="In dbSNP:rs17339472." evidence="4 10">
    <original>S</original>
    <variation>G</variation>
    <location>
        <position position="1891"/>
    </location>
</feature>
<feature type="sequence variant" id="VAR_079295" description="In MRD45." evidence="8">
    <location>
        <begin position="1901"/>
        <end position="2517"/>
    </location>
</feature>
<feature type="strand" evidence="21">
    <location>
        <begin position="940"/>
        <end position="942"/>
    </location>
</feature>
<feature type="helix" evidence="21">
    <location>
        <begin position="946"/>
        <end position="948"/>
    </location>
</feature>
<feature type="strand" evidence="20">
    <location>
        <begin position="953"/>
        <end position="955"/>
    </location>
</feature>
<feature type="helix" evidence="22">
    <location>
        <begin position="1115"/>
        <end position="1130"/>
    </location>
</feature>
<feature type="helix" evidence="22">
    <location>
        <begin position="1136"/>
        <end position="1148"/>
    </location>
</feature>
<feature type="helix" evidence="22">
    <location>
        <begin position="1152"/>
        <end position="1172"/>
    </location>
</feature>
<feature type="strand" evidence="22">
    <location>
        <begin position="1173"/>
        <end position="1175"/>
    </location>
</feature>
<feature type="helix" evidence="23">
    <location>
        <begin position="1211"/>
        <end position="1213"/>
    </location>
</feature>
<comment type="function">
    <text evidence="1">Transcriptional repressor which plays a role in development of the central nervous system (CNS). In concert with ATXN1 and ATXN1L, involved in brain development.</text>
</comment>
<comment type="subunit">
    <text evidence="1">Found in a complex with ATXN1 and ATXN1L.</text>
</comment>
<comment type="subunit">
    <molecule>Isoform 1</molecule>
    <text evidence="1">Interacts with ATXN1.</text>
</comment>
<comment type="subunit">
    <molecule>Isoform 2</molecule>
    <text evidence="1">Interacts with ATXN1.</text>
</comment>
<comment type="interaction">
    <interactant intactId="EBI-945857">
        <id>Q96RK0</id>
    </interactant>
    <interactant intactId="EBI-930964">
        <id>P54253</id>
        <label>ATXN1</label>
    </interactant>
    <organismsDiffer>false</organismsDiffer>
    <experiments>9</experiments>
</comment>
<comment type="interaction">
    <interactant intactId="EBI-945857">
        <id>Q96RK0</id>
    </interactant>
    <interactant intactId="EBI-946194">
        <id>Q9HC77</id>
        <label>CENPJ</label>
    </interactant>
    <organismsDiffer>false</organismsDiffer>
    <experiments>2</experiments>
</comment>
<comment type="interaction">
    <interactant intactId="EBI-945857">
        <id>Q96RK0</id>
    </interactant>
    <interactant intactId="EBI-618309">
        <id>Q08379</id>
        <label>GOLGA2</label>
    </interactant>
    <organismsDiffer>false</organismsDiffer>
    <experiments>4</experiments>
</comment>
<comment type="subcellular location">
    <subcellularLocation>
        <location evidence="2">Nucleus</location>
    </subcellularLocation>
</comment>
<comment type="alternative products">
    <event type="alternative splicing"/>
    <isoform>
        <id>Q96RK0-1</id>
        <name>1</name>
        <sequence type="displayed"/>
    </isoform>
    <isoform>
        <id>Q96RK0-2</id>
        <name>2</name>
        <sequence type="described" ref="VSP_062286 VSP_062287"/>
    </isoform>
</comment>
<comment type="tissue specificity">
    <text evidence="5">Expressed in fetal brain.</text>
</comment>
<comment type="disease" evidence="7 8">
    <disease id="DI-05061">
        <name>Intellectual developmental disorder, autosomal dominant 45</name>
        <acronym>MRD45</acronym>
        <description>A disorder characterized by significantly below average general intellectual functioning associated with impairments in adaptive behavior and manifested during the developmental period. MRD45 patients manifest developmental delay, variable intellectual disability, and behavioral disorders, including autistic features, attention deficit, and hyperactivity.</description>
        <dbReference type="MIM" id="617600"/>
    </disease>
    <text>The disease is caused by variants affecting the gene represented in this entry.</text>
</comment>
<comment type="miscellaneous">
    <text>Expressed in medulloblastoma, a pediatric brain tumor which may arise from the granule cell lineage.</text>
</comment>
<comment type="sequence caution" evidence="11">
    <conflict type="erroneous gene model prediction">
        <sequence resource="EMBL-CDS" id="AAD11988"/>
    </conflict>
</comment>
<proteinExistence type="evidence at protein level"/>
<gene>
    <name type="primary">CIC</name>
    <name type="synonym">KIAA0306</name>
</gene>
<accession>Q96RK0</accession>
<accession>A0A7P0T9K5</accession>
<accession>Q7LGI1</accession>
<accession>Q9UEG5</accession>
<accession>Q9Y6T1</accession>
<evidence type="ECO:0000250" key="1">
    <source>
        <dbReference type="UniProtKB" id="Q924A2"/>
    </source>
</evidence>
<evidence type="ECO:0000255" key="2">
    <source>
        <dbReference type="PROSITE-ProRule" id="PRU00267"/>
    </source>
</evidence>
<evidence type="ECO:0000256" key="3">
    <source>
        <dbReference type="SAM" id="MobiDB-lite"/>
    </source>
</evidence>
<evidence type="ECO:0000269" key="4">
    <source>
    </source>
</evidence>
<evidence type="ECO:0000269" key="5">
    <source>
    </source>
</evidence>
<evidence type="ECO:0000269" key="6">
    <source>
    </source>
</evidence>
<evidence type="ECO:0000269" key="7">
    <source>
    </source>
</evidence>
<evidence type="ECO:0000269" key="8">
    <source>
    </source>
</evidence>
<evidence type="ECO:0000269" key="9">
    <source>
    </source>
</evidence>
<evidence type="ECO:0000269" key="10">
    <source>
    </source>
</evidence>
<evidence type="ECO:0000305" key="11"/>
<evidence type="ECO:0007744" key="12">
    <source>
    </source>
</evidence>
<evidence type="ECO:0007744" key="13">
    <source>
    </source>
</evidence>
<evidence type="ECO:0007744" key="14">
    <source>
    </source>
</evidence>
<evidence type="ECO:0007744" key="15">
    <source>
    </source>
</evidence>
<evidence type="ECO:0007744" key="16">
    <source>
    </source>
</evidence>
<evidence type="ECO:0007744" key="17">
    <source>
    </source>
</evidence>
<evidence type="ECO:0007744" key="18">
    <source>
    </source>
</evidence>
<evidence type="ECO:0007744" key="19">
    <source>
    </source>
</evidence>
<evidence type="ECO:0007829" key="20">
    <source>
        <dbReference type="PDB" id="2M41"/>
    </source>
</evidence>
<evidence type="ECO:0007829" key="21">
    <source>
        <dbReference type="PDB" id="4J2J"/>
    </source>
</evidence>
<evidence type="ECO:0007829" key="22">
    <source>
        <dbReference type="PDB" id="6JRP"/>
    </source>
</evidence>
<evidence type="ECO:0007829" key="23">
    <source>
        <dbReference type="PDB" id="6KZG"/>
    </source>
</evidence>
<dbReference type="EMBL" id="AF363689">
    <property type="protein sequence ID" value="AAK73515.1"/>
    <property type="molecule type" value="mRNA"/>
</dbReference>
<dbReference type="EMBL" id="AC006486">
    <property type="protein sequence ID" value="AAD11988.1"/>
    <property type="status" value="ALT_SEQ"/>
    <property type="molecule type" value="Genomic_DNA"/>
</dbReference>
<dbReference type="EMBL" id="AB002304">
    <property type="protein sequence ID" value="BAA20765.1"/>
    <property type="molecule type" value="mRNA"/>
</dbReference>
<dbReference type="CCDS" id="CCDS12601.1">
    <molecule id="Q96RK0-2"/>
</dbReference>
<dbReference type="CCDS" id="CCDS92632.1">
    <molecule id="Q96RK0-1"/>
</dbReference>
<dbReference type="RefSeq" id="NP_001291744.1">
    <molecule id="Q96RK0-1"/>
    <property type="nucleotide sequence ID" value="NM_001304815.2"/>
</dbReference>
<dbReference type="RefSeq" id="NP_001373227.1">
    <molecule id="Q96RK0-1"/>
    <property type="nucleotide sequence ID" value="NM_001386298.1"/>
</dbReference>
<dbReference type="RefSeq" id="NP_055940.3">
    <molecule id="Q96RK0-2"/>
    <property type="nucleotide sequence ID" value="NM_015125.4"/>
</dbReference>
<dbReference type="RefSeq" id="XP_011524962.1">
    <property type="nucleotide sequence ID" value="XM_011526660.2"/>
</dbReference>
<dbReference type="RefSeq" id="XP_047294448.1">
    <molecule id="Q96RK0-1"/>
    <property type="nucleotide sequence ID" value="XM_047438492.1"/>
</dbReference>
<dbReference type="RefSeq" id="XP_054176288.1">
    <molecule id="Q96RK0-1"/>
    <property type="nucleotide sequence ID" value="XM_054320313.1"/>
</dbReference>
<dbReference type="PDB" id="2M41">
    <property type="method" value="NMR"/>
    <property type="chains" value="A=943-957"/>
</dbReference>
<dbReference type="PDB" id="4J2J">
    <property type="method" value="X-ray"/>
    <property type="resolution" value="2.50 A"/>
    <property type="chains" value="D/E/F=937-957"/>
</dbReference>
<dbReference type="PDB" id="4J2L">
    <property type="method" value="X-ray"/>
    <property type="resolution" value="3.15 A"/>
    <property type="chains" value="C/D=930-957"/>
</dbReference>
<dbReference type="PDB" id="6JRP">
    <property type="method" value="X-ray"/>
    <property type="resolution" value="3.00 A"/>
    <property type="chains" value="A/D/G/J=1108-1185"/>
</dbReference>
<dbReference type="PDB" id="6KZG">
    <property type="method" value="X-ray"/>
    <property type="resolution" value="2.00 A"/>
    <property type="chains" value="C/Q=1207-1214"/>
</dbReference>
<dbReference type="PDB" id="6KZH">
    <property type="method" value="X-ray"/>
    <property type="resolution" value="2.65 A"/>
    <property type="chains" value="C/Q=1079-1086"/>
</dbReference>
<dbReference type="PDBsum" id="2M41"/>
<dbReference type="PDBsum" id="4J2J"/>
<dbReference type="PDBsum" id="4J2L"/>
<dbReference type="PDBsum" id="6JRP"/>
<dbReference type="PDBsum" id="6KZG"/>
<dbReference type="PDBsum" id="6KZH"/>
<dbReference type="BMRB" id="Q96RK0"/>
<dbReference type="SMR" id="Q96RK0"/>
<dbReference type="BioGRID" id="116767">
    <property type="interactions" value="679"/>
</dbReference>
<dbReference type="CORUM" id="Q96RK0"/>
<dbReference type="DIP" id="DIP-49964N"/>
<dbReference type="FunCoup" id="Q96RK0">
    <property type="interactions" value="3118"/>
</dbReference>
<dbReference type="IntAct" id="Q96RK0">
    <property type="interactions" value="81"/>
</dbReference>
<dbReference type="MINT" id="Q96RK0"/>
<dbReference type="STRING" id="9606.ENSP00000458663"/>
<dbReference type="GlyCosmos" id="Q96RK0">
    <property type="glycosylation" value="4 sites, 1 glycan"/>
</dbReference>
<dbReference type="GlyGen" id="Q96RK0">
    <property type="glycosylation" value="6 sites, 1 N-linked glycan (1 site), 1 O-linked glycan (4 sites)"/>
</dbReference>
<dbReference type="iPTMnet" id="Q96RK0"/>
<dbReference type="PhosphoSitePlus" id="Q96RK0"/>
<dbReference type="SwissPalm" id="Q96RK0"/>
<dbReference type="BioMuta" id="CIC"/>
<dbReference type="DMDM" id="116241300"/>
<dbReference type="CPTAC" id="CPTAC-1346"/>
<dbReference type="jPOST" id="Q96RK0"/>
<dbReference type="MassIVE" id="Q96RK0"/>
<dbReference type="PaxDb" id="9606-ENSP00000458663"/>
<dbReference type="PeptideAtlas" id="Q96RK0"/>
<dbReference type="ProteomicsDB" id="77973"/>
<dbReference type="Pumba" id="Q96RK0"/>
<dbReference type="Antibodypedia" id="17427">
    <property type="antibodies" value="255 antibodies from 29 providers"/>
</dbReference>
<dbReference type="DNASU" id="23152"/>
<dbReference type="Ensembl" id="ENST00000575354.6">
    <molecule id="Q96RK0-2"/>
    <property type="protein sequence ID" value="ENSP00000458663.2"/>
    <property type="gene ID" value="ENSG00000079432.9"/>
</dbReference>
<dbReference type="Ensembl" id="ENST00000681038.1">
    <molecule id="Q96RK0-1"/>
    <property type="protein sequence ID" value="ENSP00000505728.1"/>
    <property type="gene ID" value="ENSG00000079432.9"/>
</dbReference>
<dbReference type="GeneID" id="23152"/>
<dbReference type="KEGG" id="hsa:23152"/>
<dbReference type="MANE-Select" id="ENST00000681038.1">
    <property type="protein sequence ID" value="ENSP00000505728.1"/>
    <property type="RefSeq nucleotide sequence ID" value="NM_001386298.1"/>
    <property type="RefSeq protein sequence ID" value="NP_001373227.1"/>
</dbReference>
<dbReference type="UCSC" id="uc002otf.1">
    <molecule id="Q96RK0-1"/>
    <property type="organism name" value="human"/>
</dbReference>
<dbReference type="AGR" id="HGNC:14214"/>
<dbReference type="CTD" id="23152"/>
<dbReference type="DisGeNET" id="23152"/>
<dbReference type="GeneCards" id="CIC"/>
<dbReference type="HGNC" id="HGNC:14214">
    <property type="gene designation" value="CIC"/>
</dbReference>
<dbReference type="HPA" id="ENSG00000079432">
    <property type="expression patterns" value="Low tissue specificity"/>
</dbReference>
<dbReference type="MalaCards" id="CIC"/>
<dbReference type="MIM" id="612082">
    <property type="type" value="gene"/>
</dbReference>
<dbReference type="MIM" id="617600">
    <property type="type" value="phenotype"/>
</dbReference>
<dbReference type="neXtProt" id="NX_Q96RK0"/>
<dbReference type="OpenTargets" id="ENSG00000079432"/>
<dbReference type="Orphanet" id="178469">
    <property type="disease" value="Autosomal dominant non-syndromic intellectual disability"/>
</dbReference>
<dbReference type="PharmGKB" id="PA26513"/>
<dbReference type="VEuPathDB" id="HostDB:ENSG00000079432"/>
<dbReference type="eggNOG" id="KOG2746">
    <property type="taxonomic scope" value="Eukaryota"/>
</dbReference>
<dbReference type="GeneTree" id="ENSGT00940000159960"/>
<dbReference type="InParanoid" id="Q96RK0"/>
<dbReference type="OrthoDB" id="10051111at2759"/>
<dbReference type="PAN-GO" id="Q96RK0">
    <property type="GO annotations" value="4 GO annotations based on evolutionary models"/>
</dbReference>
<dbReference type="PhylomeDB" id="Q96RK0"/>
<dbReference type="TreeFam" id="TF323412"/>
<dbReference type="PathwayCommons" id="Q96RK0"/>
<dbReference type="SignaLink" id="Q96RK0"/>
<dbReference type="SIGNOR" id="Q96RK0"/>
<dbReference type="BioGRID-ORCS" id="23152">
    <property type="hits" value="36 hits in 1189 CRISPR screens"/>
</dbReference>
<dbReference type="ChiTaRS" id="CIC">
    <property type="organism name" value="human"/>
</dbReference>
<dbReference type="GeneWiki" id="CIC_(gene)"/>
<dbReference type="GenomeRNAi" id="23152"/>
<dbReference type="Pharos" id="Q96RK0">
    <property type="development level" value="Tbio"/>
</dbReference>
<dbReference type="PRO" id="PR:Q96RK0"/>
<dbReference type="Proteomes" id="UP000005640">
    <property type="component" value="Chromosome 19"/>
</dbReference>
<dbReference type="RNAct" id="Q96RK0">
    <property type="molecule type" value="protein"/>
</dbReference>
<dbReference type="Bgee" id="ENSG00000079432">
    <property type="expression patterns" value="Expressed in right hemisphere of cerebellum and 191 other cell types or tissues"/>
</dbReference>
<dbReference type="ExpressionAtlas" id="Q96RK0">
    <property type="expression patterns" value="baseline and differential"/>
</dbReference>
<dbReference type="GO" id="GO:0000785">
    <property type="term" value="C:chromatin"/>
    <property type="evidence" value="ECO:0000247"/>
    <property type="project" value="NTNU_SB"/>
</dbReference>
<dbReference type="GO" id="GO:0043231">
    <property type="term" value="C:intracellular membrane-bounded organelle"/>
    <property type="evidence" value="ECO:0000314"/>
    <property type="project" value="HPA"/>
</dbReference>
<dbReference type="GO" id="GO:0005654">
    <property type="term" value="C:nucleoplasm"/>
    <property type="evidence" value="ECO:0000314"/>
    <property type="project" value="HPA"/>
</dbReference>
<dbReference type="GO" id="GO:0005634">
    <property type="term" value="C:nucleus"/>
    <property type="evidence" value="ECO:0000318"/>
    <property type="project" value="GO_Central"/>
</dbReference>
<dbReference type="GO" id="GO:0032991">
    <property type="term" value="C:protein-containing complex"/>
    <property type="evidence" value="ECO:0007669"/>
    <property type="project" value="Ensembl"/>
</dbReference>
<dbReference type="GO" id="GO:0003682">
    <property type="term" value="F:chromatin binding"/>
    <property type="evidence" value="ECO:0007669"/>
    <property type="project" value="Ensembl"/>
</dbReference>
<dbReference type="GO" id="GO:0000981">
    <property type="term" value="F:DNA-binding transcription factor activity, RNA polymerase II-specific"/>
    <property type="evidence" value="ECO:0000247"/>
    <property type="project" value="NTNU_SB"/>
</dbReference>
<dbReference type="GO" id="GO:0000977">
    <property type="term" value="F:RNA polymerase II transcription regulatory region sequence-specific DNA binding"/>
    <property type="evidence" value="ECO:0000318"/>
    <property type="project" value="GO_Central"/>
</dbReference>
<dbReference type="GO" id="GO:0007420">
    <property type="term" value="P:brain development"/>
    <property type="evidence" value="ECO:0000250"/>
    <property type="project" value="UniProtKB"/>
</dbReference>
<dbReference type="GO" id="GO:0007612">
    <property type="term" value="P:learning"/>
    <property type="evidence" value="ECO:0000250"/>
    <property type="project" value="UniProtKB"/>
</dbReference>
<dbReference type="GO" id="GO:0048286">
    <property type="term" value="P:lung alveolus development"/>
    <property type="evidence" value="ECO:0007669"/>
    <property type="project" value="Ensembl"/>
</dbReference>
<dbReference type="GO" id="GO:0007613">
    <property type="term" value="P:memory"/>
    <property type="evidence" value="ECO:0000250"/>
    <property type="project" value="UniProtKB"/>
</dbReference>
<dbReference type="GO" id="GO:0045892">
    <property type="term" value="P:negative regulation of DNA-templated transcription"/>
    <property type="evidence" value="ECO:0000250"/>
    <property type="project" value="UniProtKB"/>
</dbReference>
<dbReference type="GO" id="GO:0000122">
    <property type="term" value="P:negative regulation of transcription by RNA polymerase II"/>
    <property type="evidence" value="ECO:0007669"/>
    <property type="project" value="Ensembl"/>
</dbReference>
<dbReference type="GO" id="GO:0006357">
    <property type="term" value="P:regulation of transcription by RNA polymerase II"/>
    <property type="evidence" value="ECO:0000318"/>
    <property type="project" value="GO_Central"/>
</dbReference>
<dbReference type="GO" id="GO:0035176">
    <property type="term" value="P:social behavior"/>
    <property type="evidence" value="ECO:0000250"/>
    <property type="project" value="UniProtKB"/>
</dbReference>
<dbReference type="GO" id="GO:0006366">
    <property type="term" value="P:transcription by RNA polymerase II"/>
    <property type="evidence" value="ECO:0007669"/>
    <property type="project" value="Ensembl"/>
</dbReference>
<dbReference type="CDD" id="cd21990">
    <property type="entry name" value="HMG-box_CIC-like"/>
    <property type="match status" value="1"/>
</dbReference>
<dbReference type="FunFam" id="1.10.30.10:FF:000010">
    <property type="entry name" value="Capicua transcriptional repressor b"/>
    <property type="match status" value="1"/>
</dbReference>
<dbReference type="Gene3D" id="1.10.30.10">
    <property type="entry name" value="High mobility group box domain"/>
    <property type="match status" value="1"/>
</dbReference>
<dbReference type="InterPro" id="IPR052412">
    <property type="entry name" value="CC-Dev_Transcription_Reg"/>
</dbReference>
<dbReference type="InterPro" id="IPR032147">
    <property type="entry name" value="DUF4819"/>
</dbReference>
<dbReference type="InterPro" id="IPR009071">
    <property type="entry name" value="HMG_box_dom"/>
</dbReference>
<dbReference type="InterPro" id="IPR036910">
    <property type="entry name" value="HMG_box_dom_sf"/>
</dbReference>
<dbReference type="PANTHER" id="PTHR13059">
    <property type="entry name" value="HMG-BOX TRANSCRIPTION FACTOR BBX"/>
    <property type="match status" value="1"/>
</dbReference>
<dbReference type="PANTHER" id="PTHR13059:SF13">
    <property type="entry name" value="PROTEIN CAPICUA HOMOLOG"/>
    <property type="match status" value="1"/>
</dbReference>
<dbReference type="Pfam" id="PF16090">
    <property type="entry name" value="DUF4819"/>
    <property type="match status" value="1"/>
</dbReference>
<dbReference type="Pfam" id="PF00505">
    <property type="entry name" value="HMG_box"/>
    <property type="match status" value="1"/>
</dbReference>
<dbReference type="SMART" id="SM00398">
    <property type="entry name" value="HMG"/>
    <property type="match status" value="1"/>
</dbReference>
<dbReference type="SUPFAM" id="SSF47095">
    <property type="entry name" value="HMG-box"/>
    <property type="match status" value="1"/>
</dbReference>
<dbReference type="PROSITE" id="PS50118">
    <property type="entry name" value="HMG_BOX_2"/>
    <property type="match status" value="1"/>
</dbReference>
<organism>
    <name type="scientific">Homo sapiens</name>
    <name type="common">Human</name>
    <dbReference type="NCBI Taxonomy" id="9606"/>
    <lineage>
        <taxon>Eukaryota</taxon>
        <taxon>Metazoa</taxon>
        <taxon>Chordata</taxon>
        <taxon>Craniata</taxon>
        <taxon>Vertebrata</taxon>
        <taxon>Euteleostomi</taxon>
        <taxon>Mammalia</taxon>
        <taxon>Eutheria</taxon>
        <taxon>Euarchontoglires</taxon>
        <taxon>Primates</taxon>
        <taxon>Haplorrhini</taxon>
        <taxon>Catarrhini</taxon>
        <taxon>Hominidae</taxon>
        <taxon>Homo</taxon>
    </lineage>
</organism>
<reference key="1">
    <citation type="journal article" date="2002" name="Brain Res. Mol. Brain Res.">
        <title>CIC, a member of a novel subfamily of the HMG-box superfamily, is transiently expressed in developing granule neurons.</title>
        <authorList>
            <person name="Lee C.-J."/>
            <person name="Chan W.-I."/>
            <person name="Cheung M."/>
            <person name="Cheng Y.-C."/>
            <person name="Appleby V.J."/>
            <person name="Orme A.T."/>
            <person name="Scotting P.J."/>
        </authorList>
    </citation>
    <scope>NUCLEOTIDE SEQUENCE [MRNA] (ISOFORM 2)</scope>
    <scope>POSSIBLE FUNCTION</scope>
    <scope>VARIANT GLY-1891</scope>
</reference>
<reference key="2">
    <citation type="journal article" date="2004" name="Nature">
        <title>The DNA sequence and biology of human chromosome 19.</title>
        <authorList>
            <person name="Grimwood J."/>
            <person name="Gordon L.A."/>
            <person name="Olsen A.S."/>
            <person name="Terry A."/>
            <person name="Schmutz J."/>
            <person name="Lamerdin J.E."/>
            <person name="Hellsten U."/>
            <person name="Goodstein D."/>
            <person name="Couronne O."/>
            <person name="Tran-Gyamfi M."/>
            <person name="Aerts A."/>
            <person name="Altherr M."/>
            <person name="Ashworth L."/>
            <person name="Bajorek E."/>
            <person name="Black S."/>
            <person name="Branscomb E."/>
            <person name="Caenepeel S."/>
            <person name="Carrano A.V."/>
            <person name="Caoile C."/>
            <person name="Chan Y.M."/>
            <person name="Christensen M."/>
            <person name="Cleland C.A."/>
            <person name="Copeland A."/>
            <person name="Dalin E."/>
            <person name="Dehal P."/>
            <person name="Denys M."/>
            <person name="Detter J.C."/>
            <person name="Escobar J."/>
            <person name="Flowers D."/>
            <person name="Fotopulos D."/>
            <person name="Garcia C."/>
            <person name="Georgescu A.M."/>
            <person name="Glavina T."/>
            <person name="Gomez M."/>
            <person name="Gonzales E."/>
            <person name="Groza M."/>
            <person name="Hammon N."/>
            <person name="Hawkins T."/>
            <person name="Haydu L."/>
            <person name="Ho I."/>
            <person name="Huang W."/>
            <person name="Israni S."/>
            <person name="Jett J."/>
            <person name="Kadner K."/>
            <person name="Kimball H."/>
            <person name="Kobayashi A."/>
            <person name="Larionov V."/>
            <person name="Leem S.-H."/>
            <person name="Lopez F."/>
            <person name="Lou Y."/>
            <person name="Lowry S."/>
            <person name="Malfatti S."/>
            <person name="Martinez D."/>
            <person name="McCready P.M."/>
            <person name="Medina C."/>
            <person name="Morgan J."/>
            <person name="Nelson K."/>
            <person name="Nolan M."/>
            <person name="Ovcharenko I."/>
            <person name="Pitluck S."/>
            <person name="Pollard M."/>
            <person name="Popkie A.P."/>
            <person name="Predki P."/>
            <person name="Quan G."/>
            <person name="Ramirez L."/>
            <person name="Rash S."/>
            <person name="Retterer J."/>
            <person name="Rodriguez A."/>
            <person name="Rogers S."/>
            <person name="Salamov A."/>
            <person name="Salazar A."/>
            <person name="She X."/>
            <person name="Smith D."/>
            <person name="Slezak T."/>
            <person name="Solovyev V."/>
            <person name="Thayer N."/>
            <person name="Tice H."/>
            <person name="Tsai M."/>
            <person name="Ustaszewska A."/>
            <person name="Vo N."/>
            <person name="Wagner M."/>
            <person name="Wheeler J."/>
            <person name="Wu K."/>
            <person name="Xie G."/>
            <person name="Yang J."/>
            <person name="Dubchak I."/>
            <person name="Furey T.S."/>
            <person name="DeJong P."/>
            <person name="Dickson M."/>
            <person name="Gordon D."/>
            <person name="Eichler E.E."/>
            <person name="Pennacchio L.A."/>
            <person name="Richardson P."/>
            <person name="Stubbs L."/>
            <person name="Rokhsar D.S."/>
            <person name="Myers R.M."/>
            <person name="Rubin E.M."/>
            <person name="Lucas S.M."/>
        </authorList>
    </citation>
    <scope>NUCLEOTIDE SEQUENCE [LARGE SCALE GENOMIC DNA]</scope>
</reference>
<reference key="3">
    <citation type="journal article" date="1997" name="DNA Res.">
        <title>Prediction of the coding sequences of unidentified human genes. VII. The complete sequences of 100 new cDNA clones from brain which can code for large proteins in vitro.</title>
        <authorList>
            <person name="Nagase T."/>
            <person name="Ishikawa K."/>
            <person name="Nakajima D."/>
            <person name="Ohira M."/>
            <person name="Seki N."/>
            <person name="Miyajima N."/>
            <person name="Tanaka A."/>
            <person name="Kotani H."/>
            <person name="Nomura N."/>
            <person name="Ohara O."/>
        </authorList>
    </citation>
    <scope>NUCLEOTIDE SEQUENCE [LARGE SCALE MRNA] OF 1067-2517</scope>
    <scope>VARIANT GLY-1891</scope>
    <source>
        <tissue>Brain</tissue>
    </source>
</reference>
<reference key="4">
    <citation type="journal article" date="2005" name="J. Neurooncol.">
        <title>CIC, a gene involved in cerebellar development and ErbB signaling, is significantly expressed in medulloblastomas.</title>
        <authorList>
            <person name="Lee C.-J."/>
            <person name="Chan W.-I."/>
            <person name="Scotting P.J."/>
        </authorList>
    </citation>
    <scope>TISSUE SPECIFICITY</scope>
    <scope>EXPRESSION IN MEDULLOBLASTOMA</scope>
</reference>
<reference key="5">
    <citation type="journal article" date="2006" name="Cell">
        <title>Global, in vivo, and site-specific phosphorylation dynamics in signaling networks.</title>
        <authorList>
            <person name="Olsen J.V."/>
            <person name="Blagoev B."/>
            <person name="Gnad F."/>
            <person name="Macek B."/>
            <person name="Kumar C."/>
            <person name="Mortensen P."/>
            <person name="Mann M."/>
        </authorList>
    </citation>
    <scope>IDENTIFICATION BY MASS SPECTROMETRY [LARGE SCALE ANALYSIS]</scope>
    <source>
        <tissue>Cervix carcinoma</tissue>
    </source>
</reference>
<reference key="6">
    <citation type="journal article" date="2008" name="J. Proteome Res.">
        <title>Combining protein-based IMAC, peptide-based IMAC, and MudPIT for efficient phosphoproteomic analysis.</title>
        <authorList>
            <person name="Cantin G.T."/>
            <person name="Yi W."/>
            <person name="Lu B."/>
            <person name="Park S.K."/>
            <person name="Xu T."/>
            <person name="Lee J.-D."/>
            <person name="Yates J.R. III"/>
        </authorList>
    </citation>
    <scope>PHOSPHORYLATION [LARGE SCALE ANALYSIS] AT SER-2287</scope>
    <scope>IDENTIFICATION BY MASS SPECTROMETRY [LARGE SCALE ANALYSIS]</scope>
    <source>
        <tissue>Cervix carcinoma</tissue>
    </source>
</reference>
<reference key="7">
    <citation type="journal article" date="2008" name="Proc. Natl. Acad. Sci. U.S.A.">
        <title>A quantitative atlas of mitotic phosphorylation.</title>
        <authorList>
            <person name="Dephoure N."/>
            <person name="Zhou C."/>
            <person name="Villen J."/>
            <person name="Beausoleil S.A."/>
            <person name="Bakalarski C.E."/>
            <person name="Elledge S.J."/>
            <person name="Gygi S.P."/>
        </authorList>
    </citation>
    <scope>PHOSPHORYLATION [LARGE SCALE ANALYSIS] AT SER-1082; SER-1630; SER-2282 AND SER-2291</scope>
    <scope>IDENTIFICATION BY MASS SPECTROMETRY [LARGE SCALE ANALYSIS]</scope>
    <source>
        <tissue>Cervix carcinoma</tissue>
    </source>
</reference>
<reference key="8">
    <citation type="journal article" date="2009" name="Sci. Signal.">
        <title>Quantitative phosphoproteomic analysis of T cell receptor signaling reveals system-wide modulation of protein-protein interactions.</title>
        <authorList>
            <person name="Mayya V."/>
            <person name="Lundgren D.H."/>
            <person name="Hwang S.-I."/>
            <person name="Rezaul K."/>
            <person name="Wu L."/>
            <person name="Eng J.K."/>
            <person name="Rodionov V."/>
            <person name="Han D.K."/>
        </authorList>
    </citation>
    <scope>PHOSPHORYLATION [LARGE SCALE ANALYSIS] AT SER-1630; SER-2282; SER-2291; SER-2306; SER-2311 AND SER-2318</scope>
    <scope>IDENTIFICATION BY MASS SPECTROMETRY [LARGE SCALE ANALYSIS]</scope>
    <source>
        <tissue>Leukemic T-cell</tissue>
    </source>
</reference>
<reference key="9">
    <citation type="journal article" date="2010" name="Sci. Signal.">
        <title>Quantitative phosphoproteomics reveals widespread full phosphorylation site occupancy during mitosis.</title>
        <authorList>
            <person name="Olsen J.V."/>
            <person name="Vermeulen M."/>
            <person name="Santamaria A."/>
            <person name="Kumar C."/>
            <person name="Miller M.L."/>
            <person name="Jensen L.J."/>
            <person name="Gnad F."/>
            <person name="Cox J."/>
            <person name="Jensen T.S."/>
            <person name="Nigg E.A."/>
            <person name="Brunak S."/>
            <person name="Mann M."/>
        </authorList>
    </citation>
    <scope>PHOSPHORYLATION [LARGE SCALE ANALYSIS] AT SER-1630 AND SER-2282</scope>
    <scope>IDENTIFICATION BY MASS SPECTROMETRY [LARGE SCALE ANALYSIS]</scope>
    <source>
        <tissue>Cervix carcinoma</tissue>
    </source>
</reference>
<reference key="10">
    <citation type="journal article" date="2011" name="Sci. Signal.">
        <title>System-wide temporal characterization of the proteome and phosphoproteome of human embryonic stem cell differentiation.</title>
        <authorList>
            <person name="Rigbolt K.T."/>
            <person name="Prokhorova T.A."/>
            <person name="Akimov V."/>
            <person name="Henningsen J."/>
            <person name="Johansen P.T."/>
            <person name="Kratchmarova I."/>
            <person name="Kassem M."/>
            <person name="Mann M."/>
            <person name="Olsen J.V."/>
            <person name="Blagoev B."/>
        </authorList>
    </citation>
    <scope>PHOSPHORYLATION [LARGE SCALE ANALYSIS] AT SER-2311</scope>
    <scope>IDENTIFICATION BY MASS SPECTROMETRY [LARGE SCALE ANALYSIS]</scope>
</reference>
<reference key="11">
    <citation type="journal article" date="2013" name="J. Proteome Res.">
        <title>Toward a comprehensive characterization of a human cancer cell phosphoproteome.</title>
        <authorList>
            <person name="Zhou H."/>
            <person name="Di Palma S."/>
            <person name="Preisinger C."/>
            <person name="Peng M."/>
            <person name="Polat A.N."/>
            <person name="Heck A.J."/>
            <person name="Mohammed S."/>
        </authorList>
    </citation>
    <scope>PHOSPHORYLATION [LARGE SCALE ANALYSIS] AT SER-1082; SER-1186; SER-1630; SER-1648; SER-2203; SER-2260; SER-2282; SER-2298; SER-2306 AND SER-2318</scope>
    <scope>IDENTIFICATION BY MASS SPECTROMETRY [LARGE SCALE ANALYSIS]</scope>
    <source>
        <tissue>Cervix carcinoma</tissue>
        <tissue>Erythroleukemia</tissue>
    </source>
</reference>
<reference key="12">
    <citation type="journal article" date="2014" name="J. Proteomics">
        <title>An enzyme assisted RP-RPLC approach for in-depth analysis of human liver phosphoproteome.</title>
        <authorList>
            <person name="Bian Y."/>
            <person name="Song C."/>
            <person name="Cheng K."/>
            <person name="Dong M."/>
            <person name="Wang F."/>
            <person name="Huang J."/>
            <person name="Sun D."/>
            <person name="Wang L."/>
            <person name="Ye M."/>
            <person name="Zou H."/>
        </authorList>
    </citation>
    <scope>PHOSPHORYLATION [LARGE SCALE ANALYSIS] AT SER-1082; SER-1271; SER-1609; SER-2306; THR-2307; SER-2318 AND SER-2504</scope>
    <scope>IDENTIFICATION BY MASS SPECTROMETRY [LARGE SCALE ANALYSIS]</scope>
    <source>
        <tissue>Liver</tissue>
    </source>
</reference>
<reference key="13">
    <citation type="journal article" date="2014" name="Mol. Cell. Proteomics">
        <title>Immunoaffinity enrichment and mass spectrometry analysis of protein methylation.</title>
        <authorList>
            <person name="Guo A."/>
            <person name="Gu H."/>
            <person name="Zhou J."/>
            <person name="Mulhern D."/>
            <person name="Wang Y."/>
            <person name="Lee K.A."/>
            <person name="Yang V."/>
            <person name="Aguiar M."/>
            <person name="Kornhauser J."/>
            <person name="Jia X."/>
            <person name="Ren J."/>
            <person name="Beausoleil S.A."/>
            <person name="Silva J.C."/>
            <person name="Vemulapalli V."/>
            <person name="Bedford M.T."/>
            <person name="Comb M.J."/>
        </authorList>
    </citation>
    <scope>METHYLATION [LARGE SCALE ANALYSIS] AT ARG-1772</scope>
    <scope>IDENTIFICATION BY MASS SPECTROMETRY [LARGE SCALE ANALYSIS]</scope>
    <source>
        <tissue>Colon carcinoma</tissue>
    </source>
</reference>
<reference key="14">
    <citation type="journal article" date="2006" name="Science">
        <title>The consensus coding sequences of human breast and colorectal cancers.</title>
        <authorList>
            <person name="Sjoeblom T."/>
            <person name="Jones S."/>
            <person name="Wood L.D."/>
            <person name="Parsons D.W."/>
            <person name="Lin J."/>
            <person name="Barber T.D."/>
            <person name="Mandelker D."/>
            <person name="Leary R.J."/>
            <person name="Ptak J."/>
            <person name="Silliman N."/>
            <person name="Szabo S."/>
            <person name="Buckhaults P."/>
            <person name="Farrell C."/>
            <person name="Meeh P."/>
            <person name="Markowitz S.D."/>
            <person name="Willis J."/>
            <person name="Dawson D."/>
            <person name="Willson J.K.V."/>
            <person name="Gazdar A.F."/>
            <person name="Hartigan J."/>
            <person name="Wu L."/>
            <person name="Liu C."/>
            <person name="Parmigiani G."/>
            <person name="Park B.H."/>
            <person name="Bachman K.E."/>
            <person name="Papadopoulos N."/>
            <person name="Vogelstein B."/>
            <person name="Kinzler K.W."/>
            <person name="Velculescu V.E."/>
        </authorList>
    </citation>
    <scope>VARIANTS [LARGE SCALE ANALYSIS] LYS-1013 AND THR-1561</scope>
</reference>
<reference key="15">
    <citation type="journal article" date="2010" name="Nat. Genet.">
        <title>A de novo paradigm for mental retardation.</title>
        <authorList>
            <person name="Vissers L.E."/>
            <person name="de Ligt J."/>
            <person name="Gilissen C."/>
            <person name="Janssen I."/>
            <person name="Steehouwer M."/>
            <person name="de Vries P."/>
            <person name="van Lier B."/>
            <person name="Arts P."/>
            <person name="Wieskamp N."/>
            <person name="del Rosario M."/>
            <person name="van Bon B.W."/>
            <person name="Hoischen A."/>
            <person name="de Vries B.B."/>
            <person name="Brunner H.G."/>
            <person name="Veltman J.A."/>
        </authorList>
    </citation>
    <scope>VARIANT MRD45 TRP-1401</scope>
</reference>
<reference key="16">
    <citation type="journal article" date="2017" name="Nat. Genet.">
        <title>Disruption of the ATXN1-CIC complex causes a spectrum of neurobehavioral phenotypes in mice and humans.</title>
        <authorList>
            <person name="Lu H.C."/>
            <person name="Tan Q."/>
            <person name="Rousseaux M.W."/>
            <person name="Wang W."/>
            <person name="Kim J.Y."/>
            <person name="Richman R."/>
            <person name="Wan Y.W."/>
            <person name="Yeh S.Y."/>
            <person name="Patel J.M."/>
            <person name="Liu X."/>
            <person name="Lin T."/>
            <person name="Lee Y."/>
            <person name="Fryer J.D."/>
            <person name="Han J."/>
            <person name="Chahrour M."/>
            <person name="Finnell R.H."/>
            <person name="Lei Y."/>
            <person name="Zurita-Jimenez M.E."/>
            <person name="Ahimaz P."/>
            <person name="Anyane-Yeboa K."/>
            <person name="Van Maldergem L."/>
            <person name="Lehalle D."/>
            <person name="Jean-Marcais N."/>
            <person name="Mosca-Boidron A.L."/>
            <person name="Thevenon J."/>
            <person name="Cousin M.A."/>
            <person name="Bro D.E."/>
            <person name="Lanpher B.C."/>
            <person name="Klee E.W."/>
            <person name="Alexander N."/>
            <person name="Bainbridge M.N."/>
            <person name="Orr H.T."/>
            <person name="Sillitoe R.V."/>
            <person name="Ljungberg M.C."/>
            <person name="Liu Z."/>
            <person name="Schaaf C.P."/>
            <person name="Zoghbi H.Y."/>
        </authorList>
    </citation>
    <scope>VARIANTS MRD45 1262-ARG--ARG-2517 DEL AND 1901-GLN--ARG-2517 DEL</scope>
    <scope>CHARACTERIZATION OF VARIANT MRD45 1262-ARG--ARG-2517 DEL</scope>
</reference>
<reference key="17">
    <citation type="journal article" date="2018" name="Nat. Commun.">
        <title>CHD3 helicase domain mutations cause a neurodevelopmental syndrome with macrocephaly and impaired speech and language.</title>
        <authorList>
            <person name="Snijders Blok L."/>
            <person name="Rousseau J."/>
            <person name="Twist J."/>
            <person name="Ehresmann S."/>
            <person name="Takaku M."/>
            <person name="Venselaar H."/>
            <person name="Rodan L.H."/>
            <person name="Nowak C.B."/>
            <person name="Douglas J."/>
            <person name="Swoboda K.J."/>
            <person name="Steeves M.A."/>
            <person name="Sahai I."/>
            <person name="Stumpel C.T.R.M."/>
            <person name="Stegmann A.P.A."/>
            <person name="Wheeler P."/>
            <person name="Willing M."/>
            <person name="Fiala E."/>
            <person name="Kochhar A."/>
            <person name="Gibson W.T."/>
            <person name="Cohen A.S.A."/>
            <person name="Agbahovbe R."/>
            <person name="Innes A.M."/>
            <person name="Au P.Y.B."/>
            <person name="Rankin J."/>
            <person name="Anderson I.J."/>
            <person name="Skinner S.A."/>
            <person name="Louie R.J."/>
            <person name="Warren H.E."/>
            <person name="Afenjar A."/>
            <person name="Keren B."/>
            <person name="Nava C."/>
            <person name="Buratti J."/>
            <person name="Isapof A."/>
            <person name="Rodriguez D."/>
            <person name="Lewandowski R."/>
            <person name="Propst J."/>
            <person name="van Essen T."/>
            <person name="Choi M."/>
            <person name="Lee S."/>
            <person name="Chae J.H."/>
            <person name="Price S."/>
            <person name="Schnur R.E."/>
            <person name="Douglas G."/>
            <person name="Wentzensen I.M."/>
            <person name="Zweier C."/>
            <person name="Reis A."/>
            <person name="Bialer M.G."/>
            <person name="Moore C."/>
            <person name="Koopmans M."/>
            <person name="Brilstra E.H."/>
            <person name="Monroe G.R."/>
            <person name="van Gassen K.L.I."/>
            <person name="van Binsbergen E."/>
            <person name="Newbury-Ecob R."/>
            <person name="Bownass L."/>
            <person name="Bader I."/>
            <person name="Mayr J.A."/>
            <person name="Wortmann S.B."/>
            <person name="Jakielski K.J."/>
            <person name="Strand E.A."/>
            <person name="Kloth K."/>
            <person name="Bierhals T."/>
            <person name="Roberts J.D."/>
            <person name="Petrovich R.M."/>
            <person name="Machida S."/>
            <person name="Kurumizaka H."/>
            <person name="Lelieveld S."/>
            <person name="Pfundt R."/>
            <person name="Jansen S."/>
            <person name="Deriziotis P."/>
            <person name="Faive L."/>
            <person name="Thevenon J."/>
            <person name="Assoum M."/>
            <person name="Shriberg L."/>
            <person name="Kleefstra T."/>
            <person name="Brunner H.G."/>
            <person name="Wade P.A."/>
            <person name="Fisher S.E."/>
            <person name="Campeau P.M."/>
        </authorList>
    </citation>
    <scope>VARIANT 1401-ARG--ARG-2517 DEL</scope>
</reference>